<gene>
    <name evidence="1" type="primary">cbiD</name>
    <name type="ordered locus">M164_0113</name>
</gene>
<sequence>MIINSLKRFGITTGAAASAAAKAAVIGLLNREKRNTVVIPTPIGLRLEIPVEKVEIDSGIACAEVKKFSGDNPDILDGLAIRCCAKLNESNEIVIVGGKGVGKVTRSGLKATMGETAISPTVRDMVINAIREVTDKGIQITIEVPNGDIIAENTLNKMVGIVGGISILGTTGIETPVSDDDYLEHIKCELNVIRQSYDFVVIAPGNSAAKYASKLFDSNSIIKVGDRIGDSIKLASSVFRKVILAGLPAKLLKVYAGIFNTHFSQGDARLESLTHASVLAGLPYDVLTKITNALSVEEAFTYMTKEQRRKVMKIVAEKILSRIKSFNGDINFCVIIFDYDGESLSRVGC</sequence>
<evidence type="ECO:0000255" key="1">
    <source>
        <dbReference type="HAMAP-Rule" id="MF_00787"/>
    </source>
</evidence>
<reference key="1">
    <citation type="journal article" date="2009" name="Proc. Natl. Acad. Sci. U.S.A.">
        <title>Biogeography of the Sulfolobus islandicus pan-genome.</title>
        <authorList>
            <person name="Reno M.L."/>
            <person name="Held N.L."/>
            <person name="Fields C.J."/>
            <person name="Burke P.V."/>
            <person name="Whitaker R.J."/>
        </authorList>
    </citation>
    <scope>NUCLEOTIDE SEQUENCE [LARGE SCALE GENOMIC DNA]</scope>
    <source>
        <strain>M.16.4 / Kamchatka #3</strain>
    </source>
</reference>
<organism>
    <name type="scientific">Saccharolobus islandicus (strain M.16.4 / Kamchatka #3)</name>
    <name type="common">Sulfolobus islandicus</name>
    <dbReference type="NCBI Taxonomy" id="426118"/>
    <lineage>
        <taxon>Archaea</taxon>
        <taxon>Thermoproteota</taxon>
        <taxon>Thermoprotei</taxon>
        <taxon>Sulfolobales</taxon>
        <taxon>Sulfolobaceae</taxon>
        <taxon>Saccharolobus</taxon>
    </lineage>
</organism>
<dbReference type="EC" id="2.1.1.195" evidence="1"/>
<dbReference type="EMBL" id="CP001402">
    <property type="protein sequence ID" value="ACR40749.1"/>
    <property type="molecule type" value="Genomic_DNA"/>
</dbReference>
<dbReference type="RefSeq" id="WP_012710290.1">
    <property type="nucleotide sequence ID" value="NC_012726.1"/>
</dbReference>
<dbReference type="SMR" id="C4KJM9"/>
<dbReference type="GeneID" id="84060591"/>
<dbReference type="KEGG" id="sid:M164_0113"/>
<dbReference type="HOGENOM" id="CLU_041273_1_0_2"/>
<dbReference type="UniPathway" id="UPA00148">
    <property type="reaction ID" value="UER00227"/>
</dbReference>
<dbReference type="Proteomes" id="UP000001479">
    <property type="component" value="Chromosome"/>
</dbReference>
<dbReference type="GO" id="GO:0043780">
    <property type="term" value="F:cobalt-precorrin-5B C1-methyltransferase activity"/>
    <property type="evidence" value="ECO:0007669"/>
    <property type="project" value="RHEA"/>
</dbReference>
<dbReference type="GO" id="GO:0019251">
    <property type="term" value="P:anaerobic cobalamin biosynthetic process"/>
    <property type="evidence" value="ECO:0007669"/>
    <property type="project" value="UniProtKB-UniRule"/>
</dbReference>
<dbReference type="GO" id="GO:0032259">
    <property type="term" value="P:methylation"/>
    <property type="evidence" value="ECO:0007669"/>
    <property type="project" value="UniProtKB-KW"/>
</dbReference>
<dbReference type="Gene3D" id="3.30.2110.10">
    <property type="entry name" value="CbiD-like"/>
    <property type="match status" value="1"/>
</dbReference>
<dbReference type="Gene3D" id="3.40.50.10720">
    <property type="entry name" value="CbiD-like domains"/>
    <property type="match status" value="1"/>
</dbReference>
<dbReference type="HAMAP" id="MF_00787">
    <property type="entry name" value="CbiD"/>
    <property type="match status" value="1"/>
</dbReference>
<dbReference type="InterPro" id="IPR002748">
    <property type="entry name" value="CbiD"/>
</dbReference>
<dbReference type="InterPro" id="IPR036074">
    <property type="entry name" value="CbiD_sf"/>
</dbReference>
<dbReference type="NCBIfam" id="TIGR00312">
    <property type="entry name" value="cbiD"/>
    <property type="match status" value="1"/>
</dbReference>
<dbReference type="PANTHER" id="PTHR35863">
    <property type="entry name" value="COBALT-PRECORRIN-5B C(1)-METHYLTRANSFERASE"/>
    <property type="match status" value="1"/>
</dbReference>
<dbReference type="PANTHER" id="PTHR35863:SF1">
    <property type="entry name" value="COBALT-PRECORRIN-5B C(1)-METHYLTRANSFERASE"/>
    <property type="match status" value="1"/>
</dbReference>
<dbReference type="Pfam" id="PF01888">
    <property type="entry name" value="CbiD"/>
    <property type="match status" value="1"/>
</dbReference>
<dbReference type="PIRSF" id="PIRSF026782">
    <property type="entry name" value="CbiD"/>
    <property type="match status" value="1"/>
</dbReference>
<dbReference type="SUPFAM" id="SSF111342">
    <property type="entry name" value="CbiD-like"/>
    <property type="match status" value="1"/>
</dbReference>
<keyword id="KW-0169">Cobalamin biosynthesis</keyword>
<keyword id="KW-0489">Methyltransferase</keyword>
<keyword id="KW-0949">S-adenosyl-L-methionine</keyword>
<keyword id="KW-0808">Transferase</keyword>
<comment type="function">
    <text evidence="1">Catalyzes the methylation of C-1 in cobalt-precorrin-5B to form cobalt-precorrin-6A.</text>
</comment>
<comment type="catalytic activity">
    <reaction evidence="1">
        <text>Co-precorrin-5B + S-adenosyl-L-methionine = Co-precorrin-6A + S-adenosyl-L-homocysteine</text>
        <dbReference type="Rhea" id="RHEA:26285"/>
        <dbReference type="ChEBI" id="CHEBI:57856"/>
        <dbReference type="ChEBI" id="CHEBI:59789"/>
        <dbReference type="ChEBI" id="CHEBI:60063"/>
        <dbReference type="ChEBI" id="CHEBI:60064"/>
        <dbReference type="EC" id="2.1.1.195"/>
    </reaction>
</comment>
<comment type="pathway">
    <text evidence="1">Cofactor biosynthesis; adenosylcobalamin biosynthesis; cob(II)yrinate a,c-diamide from sirohydrochlorin (anaerobic route): step 6/10.</text>
</comment>
<comment type="similarity">
    <text evidence="1">Belongs to the CbiD family.</text>
</comment>
<protein>
    <recommendedName>
        <fullName evidence="1">Cobalt-precorrin-5B C(1)-methyltransferase</fullName>
        <ecNumber evidence="1">2.1.1.195</ecNumber>
    </recommendedName>
    <alternativeName>
        <fullName evidence="1">Cobalt-precorrin-6A synthase</fullName>
    </alternativeName>
</protein>
<name>CBID_SACI6</name>
<feature type="chain" id="PRO_1000212941" description="Cobalt-precorrin-5B C(1)-methyltransferase">
    <location>
        <begin position="1"/>
        <end position="349"/>
    </location>
</feature>
<proteinExistence type="inferred from homology"/>
<accession>C4KJM9</accession>